<proteinExistence type="predicted"/>
<dbReference type="EMBL" id="AJ010302">
    <property type="protein sequence ID" value="CAB38731.1"/>
    <property type="molecule type" value="Genomic_DNA"/>
</dbReference>
<dbReference type="EMBL" id="AF195122">
    <property type="protein sequence ID" value="AAF24281.1"/>
    <property type="molecule type" value="Genomic_DNA"/>
</dbReference>
<dbReference type="EMBL" id="CP000143">
    <property type="protein sequence ID" value="ABA79452.1"/>
    <property type="molecule type" value="Genomic_DNA"/>
</dbReference>
<dbReference type="PIR" id="T50737">
    <property type="entry name" value="T50737"/>
</dbReference>
<dbReference type="RefSeq" id="WP_011338121.1">
    <property type="nucleotide sequence ID" value="NC_007493.2"/>
</dbReference>
<dbReference type="RefSeq" id="YP_353353.1">
    <property type="nucleotide sequence ID" value="NC_007493.2"/>
</dbReference>
<dbReference type="SMR" id="Q9Z5D6"/>
<dbReference type="STRING" id="272943.RSP_0279"/>
<dbReference type="EnsemblBacteria" id="ABA79452">
    <property type="protein sequence ID" value="ABA79452"/>
    <property type="gene ID" value="RSP_0279"/>
</dbReference>
<dbReference type="GeneID" id="3719288"/>
<dbReference type="KEGG" id="rsp:RSP_0279"/>
<dbReference type="PATRIC" id="fig|272943.9.peg.2222"/>
<dbReference type="eggNOG" id="COG0382">
    <property type="taxonomic scope" value="Bacteria"/>
</dbReference>
<dbReference type="OrthoDB" id="8559716at2"/>
<dbReference type="PhylomeDB" id="Q9Z5D6"/>
<dbReference type="BRENDA" id="2.5.1.133">
    <property type="organism ID" value="5383"/>
</dbReference>
<dbReference type="BRENDA" id="2.5.1.B43">
    <property type="organism ID" value="5383"/>
</dbReference>
<dbReference type="UniPathway" id="UPA00671"/>
<dbReference type="Proteomes" id="UP000002703">
    <property type="component" value="Chromosome 1"/>
</dbReference>
<dbReference type="GO" id="GO:0005886">
    <property type="term" value="C:plasma membrane"/>
    <property type="evidence" value="ECO:0007669"/>
    <property type="project" value="UniProtKB-SubCell"/>
</dbReference>
<dbReference type="GO" id="GO:0016765">
    <property type="term" value="F:transferase activity, transferring alkyl or aryl (other than methyl) groups"/>
    <property type="evidence" value="ECO:0007669"/>
    <property type="project" value="InterPro"/>
</dbReference>
<dbReference type="GO" id="GO:0036070">
    <property type="term" value="P:light-independent bacteriochlorophyll biosynthetic process"/>
    <property type="evidence" value="ECO:0007669"/>
    <property type="project" value="UniProtKB-UniPathway"/>
</dbReference>
<dbReference type="GO" id="GO:0015979">
    <property type="term" value="P:photosynthesis"/>
    <property type="evidence" value="ECO:0007669"/>
    <property type="project" value="UniProtKB-KW"/>
</dbReference>
<dbReference type="CDD" id="cd13958">
    <property type="entry name" value="PT_UbiA_chlorophyll"/>
    <property type="match status" value="1"/>
</dbReference>
<dbReference type="Gene3D" id="1.10.357.140">
    <property type="entry name" value="UbiA prenyltransferase"/>
    <property type="match status" value="1"/>
</dbReference>
<dbReference type="Gene3D" id="1.20.120.1780">
    <property type="entry name" value="UbiA prenyltransferase"/>
    <property type="match status" value="1"/>
</dbReference>
<dbReference type="InterPro" id="IPR006372">
    <property type="entry name" value="Chl_synth"/>
</dbReference>
<dbReference type="InterPro" id="IPR050475">
    <property type="entry name" value="Prenyltransferase_related"/>
</dbReference>
<dbReference type="InterPro" id="IPR000537">
    <property type="entry name" value="UbiA_prenyltransferase"/>
</dbReference>
<dbReference type="InterPro" id="IPR044878">
    <property type="entry name" value="UbiA_sf"/>
</dbReference>
<dbReference type="NCBIfam" id="TIGR01476">
    <property type="entry name" value="chlor_syn_BchG"/>
    <property type="match status" value="1"/>
</dbReference>
<dbReference type="NCBIfam" id="NF005742">
    <property type="entry name" value="PRK07566.1"/>
    <property type="match status" value="1"/>
</dbReference>
<dbReference type="PANTHER" id="PTHR42723">
    <property type="entry name" value="CHLOROPHYLL SYNTHASE"/>
    <property type="match status" value="1"/>
</dbReference>
<dbReference type="PANTHER" id="PTHR42723:SF1">
    <property type="entry name" value="CHLOROPHYLL SYNTHASE, CHLOROPLASTIC"/>
    <property type="match status" value="1"/>
</dbReference>
<dbReference type="Pfam" id="PF01040">
    <property type="entry name" value="UbiA"/>
    <property type="match status" value="1"/>
</dbReference>
<sequence>MSVNLSLHPRSVPEPRALLELIQPITWFPPIWAYLCGTVSVGIWPGEKWPLVLLGMVLAGPLVCGMSQAANNWCDRHVDAVNEPDRPIPSGRIPGRWGLYIALLMTVLSLAVGWMLGPWGFGATVFGVLAAWAYSVEPIRLKRSGWWGPGLVALCYEGLPWFTGAAVLSAGAPSFFIVTVALLYAFGAHGIMTLNDFKALEGDRQHGVRSLPVMLGPEVAAKLACTVMAMAQILVITLLVIWGKPIHAGIITALLVAQLFAMRVLLRDPAGKCPWYNGTGVTLYVLGMMVAAFAIRGLEVLP</sequence>
<protein>
    <recommendedName>
        <fullName>Bacteriochlorophyll synthase 33 kDa chain</fullName>
    </recommendedName>
    <alternativeName>
        <fullName>Geranylgeranyl bacteriochlorophyll synthase</fullName>
    </alternativeName>
</protein>
<organism>
    <name type="scientific">Cereibacter sphaeroides (strain ATCC 17023 / DSM 158 / JCM 6121 / CCUG 31486 / LMG 2827 / NBRC 12203 / NCIMB 8253 / ATH 2.4.1.)</name>
    <name type="common">Rhodobacter sphaeroides</name>
    <dbReference type="NCBI Taxonomy" id="272943"/>
    <lineage>
        <taxon>Bacteria</taxon>
        <taxon>Pseudomonadati</taxon>
        <taxon>Pseudomonadota</taxon>
        <taxon>Alphaproteobacteria</taxon>
        <taxon>Rhodobacterales</taxon>
        <taxon>Paracoccaceae</taxon>
        <taxon>Cereibacter</taxon>
    </lineage>
</organism>
<evidence type="ECO:0000255" key="1"/>
<evidence type="ECO:0000305" key="2"/>
<comment type="function">
    <text>Catalyzes the esterification of bacteriochlorophyllide a by geranylgeraniol-PPi.</text>
</comment>
<comment type="pathway">
    <text>Porphyrin-containing compound metabolism; bacteriochlorophyll biosynthesis (light-independent).</text>
</comment>
<comment type="subcellular location">
    <subcellularLocation>
        <location evidence="2">Cell membrane</location>
        <topology evidence="2">Multi-pass membrane protein</topology>
    </subcellularLocation>
</comment>
<reference key="1">
    <citation type="journal article" date="1999" name="Photosyn. Res.">
        <title>The photosynthesis gene cluster of Rhodobacter sphaeroides.</title>
        <authorList>
            <person name="Naylor G.W."/>
            <person name="Addlesee H.A."/>
            <person name="Gibson L.C.D."/>
            <person name="Hunter C.N."/>
        </authorList>
    </citation>
    <scope>NUCLEOTIDE SEQUENCE [GENOMIC DNA]</scope>
</reference>
<reference key="2">
    <citation type="journal article" date="2000" name="Nucleic Acids Res.">
        <title>DNA sequence analysis of the photosynthesis region of Rhodobacter sphaeroides 2.4.1.</title>
        <authorList>
            <person name="Choudhary M."/>
            <person name="Kaplan S."/>
        </authorList>
    </citation>
    <scope>NUCLEOTIDE SEQUENCE [GENOMIC DNA]</scope>
</reference>
<reference key="3">
    <citation type="submission" date="2005-09" db="EMBL/GenBank/DDBJ databases">
        <title>Complete sequence of chromosome 1 of Rhodobacter sphaeroides 2.4.1.</title>
        <authorList>
            <person name="Copeland A."/>
            <person name="Lucas S."/>
            <person name="Lapidus A."/>
            <person name="Barry K."/>
            <person name="Detter J.C."/>
            <person name="Glavina T."/>
            <person name="Hammon N."/>
            <person name="Israni S."/>
            <person name="Pitluck S."/>
            <person name="Richardson P."/>
            <person name="Mackenzie C."/>
            <person name="Choudhary M."/>
            <person name="Larimer F."/>
            <person name="Hauser L.J."/>
            <person name="Land M."/>
            <person name="Donohue T.J."/>
            <person name="Kaplan S."/>
        </authorList>
    </citation>
    <scope>NUCLEOTIDE SEQUENCE [LARGE SCALE GENOMIC DNA]</scope>
    <source>
        <strain>ATCC 17023 / DSM 158 / JCM 6121 / CCUG 31486 / LMG 2827 / NBRC 12203 / NCIMB 8253 / ATH 2.4.1.</strain>
    </source>
</reference>
<gene>
    <name type="primary">bchG</name>
    <name type="ordered locus">RHOS4_18840</name>
    <name type="ORF">RSP_0279</name>
</gene>
<feature type="chain" id="PRO_0000064880" description="Bacteriochlorophyll synthase 33 kDa chain">
    <location>
        <begin position="1"/>
        <end position="302"/>
    </location>
</feature>
<feature type="transmembrane region" description="Helical" evidence="1">
    <location>
        <begin position="25"/>
        <end position="45"/>
    </location>
</feature>
<feature type="transmembrane region" description="Helical" evidence="1">
    <location>
        <begin position="49"/>
        <end position="69"/>
    </location>
</feature>
<feature type="transmembrane region" description="Helical" evidence="1">
    <location>
        <begin position="97"/>
        <end position="117"/>
    </location>
</feature>
<feature type="transmembrane region" description="Helical" evidence="1">
    <location>
        <begin position="119"/>
        <end position="139"/>
    </location>
</feature>
<feature type="transmembrane region" description="Helical" evidence="1">
    <location>
        <begin position="145"/>
        <end position="165"/>
    </location>
</feature>
<feature type="transmembrane region" description="Helical" evidence="1">
    <location>
        <begin position="166"/>
        <end position="186"/>
    </location>
</feature>
<feature type="transmembrane region" description="Helical" evidence="1">
    <location>
        <begin position="223"/>
        <end position="243"/>
    </location>
</feature>
<feature type="transmembrane region" description="Helical" evidence="1">
    <location>
        <begin position="246"/>
        <end position="266"/>
    </location>
</feature>
<feature type="transmembrane region" description="Helical" evidence="1">
    <location>
        <begin position="275"/>
        <end position="295"/>
    </location>
</feature>
<keyword id="KW-0077">Bacteriochlorophyll biosynthesis</keyword>
<keyword id="KW-1003">Cell membrane</keyword>
<keyword id="KW-0149">Chlorophyll biosynthesis</keyword>
<keyword id="KW-0472">Membrane</keyword>
<keyword id="KW-0602">Photosynthesis</keyword>
<keyword id="KW-1185">Reference proteome</keyword>
<keyword id="KW-0812">Transmembrane</keyword>
<keyword id="KW-1133">Transmembrane helix</keyword>
<accession>Q9Z5D6</accession>
<accession>Q3J182</accession>
<name>BCHG_CERS4</name>